<feature type="chain" id="PRO_1000018972" description="Bifunctional purine biosynthesis protein PurH">
    <location>
        <begin position="1"/>
        <end position="515"/>
    </location>
</feature>
<feature type="domain" description="MGS-like" evidence="2">
    <location>
        <begin position="1"/>
        <end position="145"/>
    </location>
</feature>
<proteinExistence type="inferred from homology"/>
<organism>
    <name type="scientific">Streptococcus pyogenes serotype M28 (strain MGAS6180)</name>
    <dbReference type="NCBI Taxonomy" id="319701"/>
    <lineage>
        <taxon>Bacteria</taxon>
        <taxon>Bacillati</taxon>
        <taxon>Bacillota</taxon>
        <taxon>Bacilli</taxon>
        <taxon>Lactobacillales</taxon>
        <taxon>Streptococcaceae</taxon>
        <taxon>Streptococcus</taxon>
    </lineage>
</organism>
<reference key="1">
    <citation type="journal article" date="2005" name="J. Infect. Dis.">
        <title>Genome sequence of a serotype M28 strain of group A Streptococcus: potential new insights into puerperal sepsis and bacterial disease specificity.</title>
        <authorList>
            <person name="Green N.M."/>
            <person name="Zhang S."/>
            <person name="Porcella S.F."/>
            <person name="Nagiec M.J."/>
            <person name="Barbian K.D."/>
            <person name="Beres S.B."/>
            <person name="Lefebvre R.B."/>
            <person name="Musser J.M."/>
        </authorList>
    </citation>
    <scope>NUCLEOTIDE SEQUENCE [LARGE SCALE GENOMIC DNA]</scope>
    <source>
        <strain>MGAS6180</strain>
    </source>
</reference>
<evidence type="ECO:0000255" key="1">
    <source>
        <dbReference type="HAMAP-Rule" id="MF_00139"/>
    </source>
</evidence>
<evidence type="ECO:0000255" key="2">
    <source>
        <dbReference type="PROSITE-ProRule" id="PRU01202"/>
    </source>
</evidence>
<gene>
    <name evidence="1" type="primary">purH</name>
    <name type="ordered locus">M28_Spy0027</name>
</gene>
<accession>Q48VY9</accession>
<dbReference type="EC" id="2.1.2.3" evidence="1"/>
<dbReference type="EC" id="3.5.4.10" evidence="1"/>
<dbReference type="EMBL" id="CP000056">
    <property type="protein sequence ID" value="AAX71141.1"/>
    <property type="molecule type" value="Genomic_DNA"/>
</dbReference>
<dbReference type="RefSeq" id="WP_002987711.1">
    <property type="nucleotide sequence ID" value="NC_007296.2"/>
</dbReference>
<dbReference type="SMR" id="Q48VY9"/>
<dbReference type="KEGG" id="spb:M28_Spy0027"/>
<dbReference type="HOGENOM" id="CLU_016316_5_2_9"/>
<dbReference type="UniPathway" id="UPA00074">
    <property type="reaction ID" value="UER00133"/>
</dbReference>
<dbReference type="UniPathway" id="UPA00074">
    <property type="reaction ID" value="UER00135"/>
</dbReference>
<dbReference type="GO" id="GO:0005829">
    <property type="term" value="C:cytosol"/>
    <property type="evidence" value="ECO:0007669"/>
    <property type="project" value="TreeGrafter"/>
</dbReference>
<dbReference type="GO" id="GO:0003937">
    <property type="term" value="F:IMP cyclohydrolase activity"/>
    <property type="evidence" value="ECO:0007669"/>
    <property type="project" value="UniProtKB-UniRule"/>
</dbReference>
<dbReference type="GO" id="GO:0004643">
    <property type="term" value="F:phosphoribosylaminoimidazolecarboxamide formyltransferase activity"/>
    <property type="evidence" value="ECO:0007669"/>
    <property type="project" value="UniProtKB-UniRule"/>
</dbReference>
<dbReference type="GO" id="GO:0006189">
    <property type="term" value="P:'de novo' IMP biosynthetic process"/>
    <property type="evidence" value="ECO:0007669"/>
    <property type="project" value="UniProtKB-UniRule"/>
</dbReference>
<dbReference type="CDD" id="cd01421">
    <property type="entry name" value="IMPCH"/>
    <property type="match status" value="1"/>
</dbReference>
<dbReference type="FunFam" id="3.40.140.20:FF:000001">
    <property type="entry name" value="Bifunctional purine biosynthesis protein PurH"/>
    <property type="match status" value="1"/>
</dbReference>
<dbReference type="FunFam" id="3.40.140.20:FF:000002">
    <property type="entry name" value="Bifunctional purine biosynthesis protein PurH"/>
    <property type="match status" value="1"/>
</dbReference>
<dbReference type="FunFam" id="3.40.50.1380:FF:000001">
    <property type="entry name" value="Bifunctional purine biosynthesis protein PurH"/>
    <property type="match status" value="1"/>
</dbReference>
<dbReference type="Gene3D" id="3.40.140.20">
    <property type="match status" value="2"/>
</dbReference>
<dbReference type="Gene3D" id="3.40.50.1380">
    <property type="entry name" value="Methylglyoxal synthase-like domain"/>
    <property type="match status" value="1"/>
</dbReference>
<dbReference type="HAMAP" id="MF_00139">
    <property type="entry name" value="PurH"/>
    <property type="match status" value="1"/>
</dbReference>
<dbReference type="InterPro" id="IPR024051">
    <property type="entry name" value="AICAR_Tfase_dup_dom_sf"/>
</dbReference>
<dbReference type="InterPro" id="IPR016193">
    <property type="entry name" value="Cytidine_deaminase-like"/>
</dbReference>
<dbReference type="InterPro" id="IPR011607">
    <property type="entry name" value="MGS-like_dom"/>
</dbReference>
<dbReference type="InterPro" id="IPR036914">
    <property type="entry name" value="MGS-like_dom_sf"/>
</dbReference>
<dbReference type="InterPro" id="IPR002695">
    <property type="entry name" value="PurH-like"/>
</dbReference>
<dbReference type="NCBIfam" id="NF002049">
    <property type="entry name" value="PRK00881.1"/>
    <property type="match status" value="1"/>
</dbReference>
<dbReference type="NCBIfam" id="TIGR00355">
    <property type="entry name" value="purH"/>
    <property type="match status" value="1"/>
</dbReference>
<dbReference type="PANTHER" id="PTHR11692:SF0">
    <property type="entry name" value="BIFUNCTIONAL PURINE BIOSYNTHESIS PROTEIN ATIC"/>
    <property type="match status" value="1"/>
</dbReference>
<dbReference type="PANTHER" id="PTHR11692">
    <property type="entry name" value="BIFUNCTIONAL PURINE BIOSYNTHESIS PROTEIN PURH"/>
    <property type="match status" value="1"/>
</dbReference>
<dbReference type="Pfam" id="PF01808">
    <property type="entry name" value="AICARFT_IMPCHas"/>
    <property type="match status" value="1"/>
</dbReference>
<dbReference type="Pfam" id="PF02142">
    <property type="entry name" value="MGS"/>
    <property type="match status" value="1"/>
</dbReference>
<dbReference type="PIRSF" id="PIRSF000414">
    <property type="entry name" value="AICARFT_IMPCHas"/>
    <property type="match status" value="1"/>
</dbReference>
<dbReference type="SMART" id="SM00798">
    <property type="entry name" value="AICARFT_IMPCHas"/>
    <property type="match status" value="1"/>
</dbReference>
<dbReference type="SMART" id="SM00851">
    <property type="entry name" value="MGS"/>
    <property type="match status" value="1"/>
</dbReference>
<dbReference type="SUPFAM" id="SSF53927">
    <property type="entry name" value="Cytidine deaminase-like"/>
    <property type="match status" value="1"/>
</dbReference>
<dbReference type="SUPFAM" id="SSF52335">
    <property type="entry name" value="Methylglyoxal synthase-like"/>
    <property type="match status" value="1"/>
</dbReference>
<dbReference type="PROSITE" id="PS51855">
    <property type="entry name" value="MGS"/>
    <property type="match status" value="1"/>
</dbReference>
<name>PUR9_STRPM</name>
<sequence>MTKRALISVSDKSGIVDFAKELKNLGWDIISTGGTKVALDNAGVETIAIDDVTGFPEMMDGRVKTLHPNIHGGLLARRDADSHLQAAKDNNIELIDLVVVNLYPFKETILRPDITYDLAVENIDIGGPSMLRSAAKNHASVTVVVDPADYATVLGELADAGQTTFETRQRLAAKVFRHTAAYDALIAEYFTTQVGEAKPEKLTITYDLKQAMRYGENPQQDADFYQKALPTDYSIASAKQLNGKELSFNNIRDADAAIRIIRDFKDRPTVVVLKHMNPCGIGQADDIETAWDYAYEADPVSIFGGIVVLNREVDAATAKKMHPIFLEIIIAPSYSEEALAILTNKKKNLRILELPFDAQAASEVEAEYTGVVGGLLVQNQDVVAENPSDWQVVTDRQPTEQEATALEFAWKAIKYVKSNGIIITNDHMTLGLGAGQTNRVGSVKIAIEQAKDHLDGAVLASDAFFPFADNIEEIAAAGIKAIIQPGGSVRDQDSIDAANKHGLTMIFTGVRHFRH</sequence>
<keyword id="KW-0378">Hydrolase</keyword>
<keyword id="KW-0511">Multifunctional enzyme</keyword>
<keyword id="KW-0658">Purine biosynthesis</keyword>
<keyword id="KW-0808">Transferase</keyword>
<protein>
    <recommendedName>
        <fullName evidence="1">Bifunctional purine biosynthesis protein PurH</fullName>
    </recommendedName>
    <domain>
        <recommendedName>
            <fullName evidence="1">Phosphoribosylaminoimidazolecarboxamide formyltransferase</fullName>
            <ecNumber evidence="1">2.1.2.3</ecNumber>
        </recommendedName>
        <alternativeName>
            <fullName evidence="1">AICAR transformylase</fullName>
        </alternativeName>
    </domain>
    <domain>
        <recommendedName>
            <fullName evidence="1">IMP cyclohydrolase</fullName>
            <ecNumber evidence="1">3.5.4.10</ecNumber>
        </recommendedName>
        <alternativeName>
            <fullName evidence="1">ATIC</fullName>
        </alternativeName>
        <alternativeName>
            <fullName evidence="1">IMP synthase</fullName>
        </alternativeName>
        <alternativeName>
            <fullName evidence="1">Inosinicase</fullName>
        </alternativeName>
    </domain>
</protein>
<comment type="catalytic activity">
    <reaction evidence="1">
        <text>(6R)-10-formyltetrahydrofolate + 5-amino-1-(5-phospho-beta-D-ribosyl)imidazole-4-carboxamide = 5-formamido-1-(5-phospho-D-ribosyl)imidazole-4-carboxamide + (6S)-5,6,7,8-tetrahydrofolate</text>
        <dbReference type="Rhea" id="RHEA:22192"/>
        <dbReference type="ChEBI" id="CHEBI:57453"/>
        <dbReference type="ChEBI" id="CHEBI:58467"/>
        <dbReference type="ChEBI" id="CHEBI:58475"/>
        <dbReference type="ChEBI" id="CHEBI:195366"/>
        <dbReference type="EC" id="2.1.2.3"/>
    </reaction>
</comment>
<comment type="catalytic activity">
    <reaction evidence="1">
        <text>IMP + H2O = 5-formamido-1-(5-phospho-D-ribosyl)imidazole-4-carboxamide</text>
        <dbReference type="Rhea" id="RHEA:18445"/>
        <dbReference type="ChEBI" id="CHEBI:15377"/>
        <dbReference type="ChEBI" id="CHEBI:58053"/>
        <dbReference type="ChEBI" id="CHEBI:58467"/>
        <dbReference type="EC" id="3.5.4.10"/>
    </reaction>
</comment>
<comment type="pathway">
    <text evidence="1">Purine metabolism; IMP biosynthesis via de novo pathway; 5-formamido-1-(5-phospho-D-ribosyl)imidazole-4-carboxamide from 5-amino-1-(5-phospho-D-ribosyl)imidazole-4-carboxamide (10-formyl THF route): step 1/1.</text>
</comment>
<comment type="pathway">
    <text evidence="1">Purine metabolism; IMP biosynthesis via de novo pathway; IMP from 5-formamido-1-(5-phospho-D-ribosyl)imidazole-4-carboxamide: step 1/1.</text>
</comment>
<comment type="domain">
    <text evidence="1">The IMP cyclohydrolase activity resides in the N-terminal region.</text>
</comment>
<comment type="similarity">
    <text evidence="1">Belongs to the PurH family.</text>
</comment>